<keyword id="KW-0687">Ribonucleoprotein</keyword>
<keyword id="KW-0689">Ribosomal protein</keyword>
<keyword id="KW-0694">RNA-binding</keyword>
<keyword id="KW-0699">rRNA-binding</keyword>
<proteinExistence type="inferred from homology"/>
<reference key="1">
    <citation type="journal article" date="2008" name="PLoS ONE">
        <title>Comparative analysis of Acinetobacters: three genomes for three lifestyles.</title>
        <authorList>
            <person name="Vallenet D."/>
            <person name="Nordmann P."/>
            <person name="Barbe V."/>
            <person name="Poirel L."/>
            <person name="Mangenot S."/>
            <person name="Bataille E."/>
            <person name="Dossat C."/>
            <person name="Gas S."/>
            <person name="Kreimeyer A."/>
            <person name="Lenoble P."/>
            <person name="Oztas S."/>
            <person name="Poulain J."/>
            <person name="Segurens B."/>
            <person name="Robert C."/>
            <person name="Abergel C."/>
            <person name="Claverie J.-M."/>
            <person name="Raoult D."/>
            <person name="Medigue C."/>
            <person name="Weissenbach J."/>
            <person name="Cruveiller S."/>
        </authorList>
    </citation>
    <scope>NUCLEOTIDE SEQUENCE [LARGE SCALE GENOMIC DNA]</scope>
    <source>
        <strain>AYE</strain>
    </source>
</reference>
<protein>
    <recommendedName>
        <fullName evidence="1">Small ribosomal subunit protein uS14</fullName>
    </recommendedName>
    <alternativeName>
        <fullName evidence="2">30S ribosomal protein S14</fullName>
    </alternativeName>
</protein>
<sequence>MAKKGMINRELKREKTVAKYAAKRAELKATIANVNASDEERFEAMLKLQALPRNASPVRLRNRCGLTGRPHGYFRKFGLSRNKLRDTVMQGDVPGVVKASW</sequence>
<accession>B0V6V8</accession>
<evidence type="ECO:0000255" key="1">
    <source>
        <dbReference type="HAMAP-Rule" id="MF_00537"/>
    </source>
</evidence>
<evidence type="ECO:0000305" key="2"/>
<organism>
    <name type="scientific">Acinetobacter baumannii (strain AYE)</name>
    <dbReference type="NCBI Taxonomy" id="509173"/>
    <lineage>
        <taxon>Bacteria</taxon>
        <taxon>Pseudomonadati</taxon>
        <taxon>Pseudomonadota</taxon>
        <taxon>Gammaproteobacteria</taxon>
        <taxon>Moraxellales</taxon>
        <taxon>Moraxellaceae</taxon>
        <taxon>Acinetobacter</taxon>
        <taxon>Acinetobacter calcoaceticus/baumannii complex</taxon>
    </lineage>
</organism>
<gene>
    <name evidence="1" type="primary">rpsN</name>
    <name type="ordered locus">ABAYE0421</name>
</gene>
<comment type="function">
    <text evidence="1">Binds 16S rRNA, required for the assembly of 30S particles and may also be responsible for determining the conformation of the 16S rRNA at the A site.</text>
</comment>
<comment type="subunit">
    <text evidence="1">Part of the 30S ribosomal subunit. Contacts proteins S3 and S10.</text>
</comment>
<comment type="similarity">
    <text evidence="1">Belongs to the universal ribosomal protein uS14 family.</text>
</comment>
<dbReference type="EMBL" id="CU459141">
    <property type="protein sequence ID" value="CAM85395.1"/>
    <property type="molecule type" value="Genomic_DNA"/>
</dbReference>
<dbReference type="RefSeq" id="WP_001074624.1">
    <property type="nucleotide sequence ID" value="NZ_JBDGFB010000011.1"/>
</dbReference>
<dbReference type="SMR" id="B0V6V8"/>
<dbReference type="EnsemblBacteria" id="CAM85395">
    <property type="protein sequence ID" value="CAM85395"/>
    <property type="gene ID" value="ABAYE0421"/>
</dbReference>
<dbReference type="GeneID" id="92895304"/>
<dbReference type="KEGG" id="aby:ABAYE0421"/>
<dbReference type="HOGENOM" id="CLU_139869_0_1_6"/>
<dbReference type="GO" id="GO:0005737">
    <property type="term" value="C:cytoplasm"/>
    <property type="evidence" value="ECO:0007669"/>
    <property type="project" value="UniProtKB-ARBA"/>
</dbReference>
<dbReference type="GO" id="GO:0015935">
    <property type="term" value="C:small ribosomal subunit"/>
    <property type="evidence" value="ECO:0007669"/>
    <property type="project" value="TreeGrafter"/>
</dbReference>
<dbReference type="GO" id="GO:0019843">
    <property type="term" value="F:rRNA binding"/>
    <property type="evidence" value="ECO:0007669"/>
    <property type="project" value="UniProtKB-UniRule"/>
</dbReference>
<dbReference type="GO" id="GO:0003735">
    <property type="term" value="F:structural constituent of ribosome"/>
    <property type="evidence" value="ECO:0007669"/>
    <property type="project" value="InterPro"/>
</dbReference>
<dbReference type="GO" id="GO:0006412">
    <property type="term" value="P:translation"/>
    <property type="evidence" value="ECO:0007669"/>
    <property type="project" value="UniProtKB-UniRule"/>
</dbReference>
<dbReference type="FunFam" id="1.10.287.1480:FF:000001">
    <property type="entry name" value="30S ribosomal protein S14"/>
    <property type="match status" value="1"/>
</dbReference>
<dbReference type="Gene3D" id="1.10.287.1480">
    <property type="match status" value="1"/>
</dbReference>
<dbReference type="HAMAP" id="MF_00537">
    <property type="entry name" value="Ribosomal_uS14_1"/>
    <property type="match status" value="1"/>
</dbReference>
<dbReference type="InterPro" id="IPR001209">
    <property type="entry name" value="Ribosomal_uS14"/>
</dbReference>
<dbReference type="InterPro" id="IPR023036">
    <property type="entry name" value="Ribosomal_uS14_bac/plastid"/>
</dbReference>
<dbReference type="InterPro" id="IPR018271">
    <property type="entry name" value="Ribosomal_uS14_CS"/>
</dbReference>
<dbReference type="NCBIfam" id="NF006477">
    <property type="entry name" value="PRK08881.1"/>
    <property type="match status" value="1"/>
</dbReference>
<dbReference type="PANTHER" id="PTHR19836">
    <property type="entry name" value="30S RIBOSOMAL PROTEIN S14"/>
    <property type="match status" value="1"/>
</dbReference>
<dbReference type="PANTHER" id="PTHR19836:SF19">
    <property type="entry name" value="SMALL RIBOSOMAL SUBUNIT PROTEIN US14M"/>
    <property type="match status" value="1"/>
</dbReference>
<dbReference type="Pfam" id="PF00253">
    <property type="entry name" value="Ribosomal_S14"/>
    <property type="match status" value="1"/>
</dbReference>
<dbReference type="SUPFAM" id="SSF57716">
    <property type="entry name" value="Glucocorticoid receptor-like (DNA-binding domain)"/>
    <property type="match status" value="1"/>
</dbReference>
<dbReference type="PROSITE" id="PS00527">
    <property type="entry name" value="RIBOSOMAL_S14"/>
    <property type="match status" value="1"/>
</dbReference>
<name>RS14_ACIBY</name>
<feature type="chain" id="PRO_1000128279" description="Small ribosomal subunit protein uS14">
    <location>
        <begin position="1"/>
        <end position="101"/>
    </location>
</feature>